<organism>
    <name type="scientific">Schizosaccharomyces pombe (strain 972 / ATCC 24843)</name>
    <name type="common">Fission yeast</name>
    <dbReference type="NCBI Taxonomy" id="284812"/>
    <lineage>
        <taxon>Eukaryota</taxon>
        <taxon>Fungi</taxon>
        <taxon>Dikarya</taxon>
        <taxon>Ascomycota</taxon>
        <taxon>Taphrinomycotina</taxon>
        <taxon>Schizosaccharomycetes</taxon>
        <taxon>Schizosaccharomycetales</taxon>
        <taxon>Schizosaccharomycetaceae</taxon>
        <taxon>Schizosaccharomyces</taxon>
    </lineage>
</organism>
<name>UVI15_SCHPO</name>
<feature type="chain" id="PRO_0000065748" description="Lipid-anchored plasma membrane protein uvi15">
    <location>
        <begin position="1"/>
        <end position="87"/>
    </location>
</feature>
<feature type="region of interest" description="Disordered" evidence="2">
    <location>
        <begin position="1"/>
        <end position="64"/>
    </location>
</feature>
<feature type="compositionally biased region" description="Low complexity" evidence="2">
    <location>
        <begin position="18"/>
        <end position="41"/>
    </location>
</feature>
<feature type="sequence conflict" description="In Ref. 1; CAA84070." evidence="5" ref="1">
    <original>GLACCCCLDAMF</original>
    <variation>VLLAVAVWMQCFKKLFGLFFLLFSKESMHH</variation>
    <location>
        <begin position="76"/>
        <end position="87"/>
    </location>
</feature>
<sequence length="87" mass="9319">MSAQQFYGDKGYAPAPPQQAYGGPNYYPPQQNYPQQGYAPPQGYPQGGYPAQQPMYVQQPQASDPGGDLCCGLLTGLACCCCLDAMF</sequence>
<proteinExistence type="evidence at protein level"/>
<reference key="1">
    <citation type="journal article" date="1995" name="Mol. Gen. Genet.">
        <title>Characterization of uvi15+, a stress-inducible gene from Schizosaccharomyces pombe.</title>
        <authorList>
            <person name="Lee J.K."/>
            <person name="Kim M."/>
            <person name="Choe J."/>
            <person name="Seong R.H."/>
            <person name="Hong S.H."/>
            <person name="Park S.D."/>
        </authorList>
    </citation>
    <scope>NUCLEOTIDE SEQUENCE [GENOMIC DNA]</scope>
    <scope>INDUCTION</scope>
    <source>
        <strain>JY741</strain>
    </source>
</reference>
<reference key="2">
    <citation type="journal article" date="2002" name="Nature">
        <title>The genome sequence of Schizosaccharomyces pombe.</title>
        <authorList>
            <person name="Wood V."/>
            <person name="Gwilliam R."/>
            <person name="Rajandream M.A."/>
            <person name="Lyne M.H."/>
            <person name="Lyne R."/>
            <person name="Stewart A."/>
            <person name="Sgouros J.G."/>
            <person name="Peat N."/>
            <person name="Hayles J."/>
            <person name="Baker S.G."/>
            <person name="Basham D."/>
            <person name="Bowman S."/>
            <person name="Brooks K."/>
            <person name="Brown D."/>
            <person name="Brown S."/>
            <person name="Chillingworth T."/>
            <person name="Churcher C.M."/>
            <person name="Collins M."/>
            <person name="Connor R."/>
            <person name="Cronin A."/>
            <person name="Davis P."/>
            <person name="Feltwell T."/>
            <person name="Fraser A."/>
            <person name="Gentles S."/>
            <person name="Goble A."/>
            <person name="Hamlin N."/>
            <person name="Harris D.E."/>
            <person name="Hidalgo J."/>
            <person name="Hodgson G."/>
            <person name="Holroyd S."/>
            <person name="Hornsby T."/>
            <person name="Howarth S."/>
            <person name="Huckle E.J."/>
            <person name="Hunt S."/>
            <person name="Jagels K."/>
            <person name="James K.D."/>
            <person name="Jones L."/>
            <person name="Jones M."/>
            <person name="Leather S."/>
            <person name="McDonald S."/>
            <person name="McLean J."/>
            <person name="Mooney P."/>
            <person name="Moule S."/>
            <person name="Mungall K.L."/>
            <person name="Murphy L.D."/>
            <person name="Niblett D."/>
            <person name="Odell C."/>
            <person name="Oliver K."/>
            <person name="O'Neil S."/>
            <person name="Pearson D."/>
            <person name="Quail M.A."/>
            <person name="Rabbinowitsch E."/>
            <person name="Rutherford K.M."/>
            <person name="Rutter S."/>
            <person name="Saunders D."/>
            <person name="Seeger K."/>
            <person name="Sharp S."/>
            <person name="Skelton J."/>
            <person name="Simmonds M.N."/>
            <person name="Squares R."/>
            <person name="Squares S."/>
            <person name="Stevens K."/>
            <person name="Taylor K."/>
            <person name="Taylor R.G."/>
            <person name="Tivey A."/>
            <person name="Walsh S.V."/>
            <person name="Warren T."/>
            <person name="Whitehead S."/>
            <person name="Woodward J.R."/>
            <person name="Volckaert G."/>
            <person name="Aert R."/>
            <person name="Robben J."/>
            <person name="Grymonprez B."/>
            <person name="Weltjens I."/>
            <person name="Vanstreels E."/>
            <person name="Rieger M."/>
            <person name="Schaefer M."/>
            <person name="Mueller-Auer S."/>
            <person name="Gabel C."/>
            <person name="Fuchs M."/>
            <person name="Duesterhoeft A."/>
            <person name="Fritzc C."/>
            <person name="Holzer E."/>
            <person name="Moestl D."/>
            <person name="Hilbert H."/>
            <person name="Borzym K."/>
            <person name="Langer I."/>
            <person name="Beck A."/>
            <person name="Lehrach H."/>
            <person name="Reinhardt R."/>
            <person name="Pohl T.M."/>
            <person name="Eger P."/>
            <person name="Zimmermann W."/>
            <person name="Wedler H."/>
            <person name="Wambutt R."/>
            <person name="Purnelle B."/>
            <person name="Goffeau A."/>
            <person name="Cadieu E."/>
            <person name="Dreano S."/>
            <person name="Gloux S."/>
            <person name="Lelaure V."/>
            <person name="Mottier S."/>
            <person name="Galibert F."/>
            <person name="Aves S.J."/>
            <person name="Xiang Z."/>
            <person name="Hunt C."/>
            <person name="Moore K."/>
            <person name="Hurst S.M."/>
            <person name="Lucas M."/>
            <person name="Rochet M."/>
            <person name="Gaillardin C."/>
            <person name="Tallada V.A."/>
            <person name="Garzon A."/>
            <person name="Thode G."/>
            <person name="Daga R.R."/>
            <person name="Cruzado L."/>
            <person name="Jimenez J."/>
            <person name="Sanchez M."/>
            <person name="del Rey F."/>
            <person name="Benito J."/>
            <person name="Dominguez A."/>
            <person name="Revuelta J.L."/>
            <person name="Moreno S."/>
            <person name="Armstrong J."/>
            <person name="Forsburg S.L."/>
            <person name="Cerutti L."/>
            <person name="Lowe T."/>
            <person name="McCombie W.R."/>
            <person name="Paulsen I."/>
            <person name="Potashkin J."/>
            <person name="Shpakovski G.V."/>
            <person name="Ussery D."/>
            <person name="Barrell B.G."/>
            <person name="Nurse P."/>
        </authorList>
    </citation>
    <scope>NUCLEOTIDE SEQUENCE [LARGE SCALE GENOMIC DNA]</scope>
    <source>
        <strain>972 / ATCC 24843</strain>
    </source>
</reference>
<reference key="3">
    <citation type="journal article" date="1994" name="Biochem. Biophys. Res. Commun.">
        <title>Isolation of UV-inducible transcripts from Schizosaccharomyces pombe.</title>
        <authorList>
            <person name="Lee J.K."/>
            <person name="Park E.J."/>
            <person name="Chung H.K."/>
            <person name="Hong S.H."/>
            <person name="Joe C.O."/>
            <person name="Park S.D."/>
        </authorList>
    </citation>
    <scope>CHARACTERIZATION</scope>
    <source>
        <strain>JY741</strain>
    </source>
</reference>
<reference key="4">
    <citation type="journal article" date="2006" name="Nat. Biotechnol.">
        <title>ORFeome cloning and global analysis of protein localization in the fission yeast Schizosaccharomyces pombe.</title>
        <authorList>
            <person name="Matsuyama A."/>
            <person name="Arai R."/>
            <person name="Yashiroda Y."/>
            <person name="Shirai A."/>
            <person name="Kamata A."/>
            <person name="Sekido S."/>
            <person name="Kobayashi Y."/>
            <person name="Hashimoto A."/>
            <person name="Hamamoto M."/>
            <person name="Hiraoka Y."/>
            <person name="Horinouchi S."/>
            <person name="Yoshida M."/>
        </authorList>
    </citation>
    <scope>SUBCELLULAR LOCATION [LARGE SCALE ANALYSIS]</scope>
</reference>
<evidence type="ECO:0000250" key="1">
    <source>
        <dbReference type="UniProtKB" id="P38216"/>
    </source>
</evidence>
<evidence type="ECO:0000256" key="2">
    <source>
        <dbReference type="SAM" id="MobiDB-lite"/>
    </source>
</evidence>
<evidence type="ECO:0000269" key="3">
    <source>
    </source>
</evidence>
<evidence type="ECO:0000269" key="4">
    <source>
    </source>
</evidence>
<evidence type="ECO:0000305" key="5"/>
<dbReference type="EMBL" id="Z34300">
    <property type="protein sequence ID" value="CAA84070.1"/>
    <property type="molecule type" value="Genomic_DNA"/>
</dbReference>
<dbReference type="EMBL" id="CU329671">
    <property type="protein sequence ID" value="CAA19046.1"/>
    <property type="molecule type" value="Genomic_DNA"/>
</dbReference>
<dbReference type="PIR" id="S54732">
    <property type="entry name" value="S54732"/>
</dbReference>
<dbReference type="PIR" id="T40597">
    <property type="entry name" value="T40597"/>
</dbReference>
<dbReference type="RefSeq" id="NP_595223.1">
    <property type="nucleotide sequence ID" value="NM_001021129.2"/>
</dbReference>
<dbReference type="BioGRID" id="277901">
    <property type="interactions" value="2"/>
</dbReference>
<dbReference type="STRING" id="284812.P40388"/>
<dbReference type="iPTMnet" id="P40388"/>
<dbReference type="PaxDb" id="4896-SPBC649.04.1"/>
<dbReference type="EnsemblFungi" id="SPBC649.04.1">
    <property type="protein sequence ID" value="SPBC649.04.1:pep"/>
    <property type="gene ID" value="SPBC649.04"/>
</dbReference>
<dbReference type="GeneID" id="2541391"/>
<dbReference type="KEGG" id="spo:2541391"/>
<dbReference type="PomBase" id="SPBC649.04">
    <property type="gene designation" value="uvi15"/>
</dbReference>
<dbReference type="VEuPathDB" id="FungiDB:SPBC649.04"/>
<dbReference type="HOGENOM" id="CLU_2623385_0_0_1"/>
<dbReference type="InParanoid" id="P40388"/>
<dbReference type="OMA" id="DAGPYYP"/>
<dbReference type="PRO" id="PR:P40388"/>
<dbReference type="Proteomes" id="UP000002485">
    <property type="component" value="Chromosome II"/>
</dbReference>
<dbReference type="GO" id="GO:0032153">
    <property type="term" value="C:cell division site"/>
    <property type="evidence" value="ECO:0007005"/>
    <property type="project" value="PomBase"/>
</dbReference>
<dbReference type="GO" id="GO:0051286">
    <property type="term" value="C:cell tip"/>
    <property type="evidence" value="ECO:0007005"/>
    <property type="project" value="PomBase"/>
</dbReference>
<dbReference type="GO" id="GO:0005886">
    <property type="term" value="C:plasma membrane"/>
    <property type="evidence" value="ECO:0000266"/>
    <property type="project" value="PomBase"/>
</dbReference>
<dbReference type="InterPro" id="IPR028144">
    <property type="entry name" value="CYSTM_dom"/>
</dbReference>
<dbReference type="Pfam" id="PF12734">
    <property type="entry name" value="CYSTM"/>
    <property type="match status" value="1"/>
</dbReference>
<gene>
    <name type="primary">uvi15</name>
    <name type="ORF">SPBC649.04</name>
</gene>
<keyword id="KW-1003">Cell membrane</keyword>
<keyword id="KW-0449">Lipoprotein</keyword>
<keyword id="KW-0472">Membrane</keyword>
<keyword id="KW-1185">Reference proteome</keyword>
<keyword id="KW-0346">Stress response</keyword>
<protein>
    <recommendedName>
        <fullName evidence="1">Lipid-anchored plasma membrane protein uvi15</fullName>
    </recommendedName>
    <alternativeName>
        <fullName>UV-induced protein uvi15</fullName>
    </alternativeName>
</protein>
<accession>P40388</accession>
<accession>O59754</accession>
<comment type="function">
    <text>Required for the maintenance of viability of cells in stationary phase and in starvation conditions.</text>
</comment>
<comment type="subcellular location">
    <subcellularLocation>
        <location evidence="1">Cell membrane</location>
        <topology evidence="1">Lipid-anchor</topology>
    </subcellularLocation>
    <subcellularLocation>
        <location evidence="3">Cell tip</location>
    </subcellularLocation>
    <text evidence="3">Also localizes to the site of cell division.</text>
</comment>
<comment type="induction">
    <text evidence="4">By UV light, alkylating agents and heat shock.</text>
</comment>
<comment type="PTM">
    <text evidence="1">Palmitoylated.</text>
</comment>
<comment type="similarity">
    <text evidence="5">Belongs to the CYSTM1 family.</text>
</comment>
<comment type="caution">
    <text evidence="1">Was predicted to contain a transmembrane helix, however experiments suggest that this region of the protein is not buried in the plasma membrane and is palmitoylated.</text>
</comment>